<sequence>MSLPLVLGSSSPRRKFILEKFRVPFTVIPSNFDESKVSYSGDPIAYTQELAAQKAYAVSELHSPCDCIILTGDTIVSYDGRIFTKPQDKADAIQMLKTLRNQTHDVVTSIAVLHKGKLLTGSETSQISLTMIPDHRIESYIDTVGTLNNCGAYDVCHGGLILKKVHGCVYNVQGLPIQTLKYLLEELNIDLWDYSI</sequence>
<dbReference type="EC" id="3.6.1.9" evidence="1"/>
<dbReference type="EMBL" id="AE001363">
    <property type="protein sequence ID" value="AAD18175.1"/>
    <property type="molecule type" value="Genomic_DNA"/>
</dbReference>
<dbReference type="EMBL" id="AE002161">
    <property type="protein sequence ID" value="AAF38557.1"/>
    <property type="molecule type" value="Genomic_DNA"/>
</dbReference>
<dbReference type="EMBL" id="BA000008">
    <property type="protein sequence ID" value="BAA98234.1"/>
    <property type="molecule type" value="Genomic_DNA"/>
</dbReference>
<dbReference type="EMBL" id="AE009440">
    <property type="protein sequence ID" value="AAP97959.1"/>
    <property type="molecule type" value="Genomic_DNA"/>
</dbReference>
<dbReference type="PIR" id="D72129">
    <property type="entry name" value="D72129"/>
</dbReference>
<dbReference type="PIR" id="H86493">
    <property type="entry name" value="H86493"/>
</dbReference>
<dbReference type="RefSeq" id="NP_224230.1">
    <property type="nucleotide sequence ID" value="NC_000922.1"/>
</dbReference>
<dbReference type="RefSeq" id="WP_010882672.1">
    <property type="nucleotide sequence ID" value="NZ_LN847257.1"/>
</dbReference>
<dbReference type="SMR" id="Q9Z9F9"/>
<dbReference type="STRING" id="406984.CPK_ORF00523"/>
<dbReference type="GeneID" id="45050069"/>
<dbReference type="KEGG" id="cpa:CP_0754"/>
<dbReference type="KEGG" id="cpj:maf"/>
<dbReference type="KEGG" id="cpn:CPn_0022"/>
<dbReference type="KEGG" id="cpt:CpB0026"/>
<dbReference type="PATRIC" id="fig|115713.3.peg.29"/>
<dbReference type="eggNOG" id="COG0424">
    <property type="taxonomic scope" value="Bacteria"/>
</dbReference>
<dbReference type="HOGENOM" id="CLU_040416_0_0_0"/>
<dbReference type="OMA" id="VIGCDSV"/>
<dbReference type="OrthoDB" id="9807767at2"/>
<dbReference type="Proteomes" id="UP000000583">
    <property type="component" value="Chromosome"/>
</dbReference>
<dbReference type="Proteomes" id="UP000000801">
    <property type="component" value="Chromosome"/>
</dbReference>
<dbReference type="GO" id="GO:0005737">
    <property type="term" value="C:cytoplasm"/>
    <property type="evidence" value="ECO:0007669"/>
    <property type="project" value="UniProtKB-SubCell"/>
</dbReference>
<dbReference type="GO" id="GO:0047429">
    <property type="term" value="F:nucleoside triphosphate diphosphatase activity"/>
    <property type="evidence" value="ECO:0007669"/>
    <property type="project" value="UniProtKB-EC"/>
</dbReference>
<dbReference type="GO" id="GO:0009117">
    <property type="term" value="P:nucleotide metabolic process"/>
    <property type="evidence" value="ECO:0007669"/>
    <property type="project" value="UniProtKB-KW"/>
</dbReference>
<dbReference type="CDD" id="cd00555">
    <property type="entry name" value="Maf"/>
    <property type="match status" value="1"/>
</dbReference>
<dbReference type="Gene3D" id="3.90.950.10">
    <property type="match status" value="1"/>
</dbReference>
<dbReference type="HAMAP" id="MF_00528">
    <property type="entry name" value="Maf"/>
    <property type="match status" value="1"/>
</dbReference>
<dbReference type="InterPro" id="IPR029001">
    <property type="entry name" value="ITPase-like_fam"/>
</dbReference>
<dbReference type="InterPro" id="IPR003697">
    <property type="entry name" value="Maf-like"/>
</dbReference>
<dbReference type="NCBIfam" id="TIGR00172">
    <property type="entry name" value="maf"/>
    <property type="match status" value="1"/>
</dbReference>
<dbReference type="PANTHER" id="PTHR43213">
    <property type="entry name" value="BIFUNCTIONAL DTTP/UTP PYROPHOSPHATASE/METHYLTRANSFERASE PROTEIN-RELATED"/>
    <property type="match status" value="1"/>
</dbReference>
<dbReference type="PANTHER" id="PTHR43213:SF5">
    <property type="entry name" value="BIFUNCTIONAL DTTP_UTP PYROPHOSPHATASE_METHYLTRANSFERASE PROTEIN-RELATED"/>
    <property type="match status" value="1"/>
</dbReference>
<dbReference type="Pfam" id="PF02545">
    <property type="entry name" value="Maf"/>
    <property type="match status" value="1"/>
</dbReference>
<dbReference type="PIRSF" id="PIRSF006305">
    <property type="entry name" value="Maf"/>
    <property type="match status" value="1"/>
</dbReference>
<dbReference type="SUPFAM" id="SSF52972">
    <property type="entry name" value="ITPase-like"/>
    <property type="match status" value="1"/>
</dbReference>
<keyword id="KW-0963">Cytoplasm</keyword>
<keyword id="KW-0378">Hydrolase</keyword>
<keyword id="KW-0546">Nucleotide metabolism</keyword>
<evidence type="ECO:0000255" key="1">
    <source>
        <dbReference type="HAMAP-Rule" id="MF_00528"/>
    </source>
</evidence>
<organism>
    <name type="scientific">Chlamydia pneumoniae</name>
    <name type="common">Chlamydophila pneumoniae</name>
    <dbReference type="NCBI Taxonomy" id="83558"/>
    <lineage>
        <taxon>Bacteria</taxon>
        <taxon>Pseudomonadati</taxon>
        <taxon>Chlamydiota</taxon>
        <taxon>Chlamydiia</taxon>
        <taxon>Chlamydiales</taxon>
        <taxon>Chlamydiaceae</taxon>
        <taxon>Chlamydia/Chlamydophila group</taxon>
        <taxon>Chlamydia</taxon>
    </lineage>
</organism>
<protein>
    <recommendedName>
        <fullName evidence="1">Nucleoside triphosphate pyrophosphatase</fullName>
        <ecNumber evidence="1">3.6.1.9</ecNumber>
    </recommendedName>
    <alternativeName>
        <fullName evidence="1">Nucleotide pyrophosphatase</fullName>
        <shortName evidence="1">Nucleotide PPase</shortName>
    </alternativeName>
</protein>
<proteinExistence type="inferred from homology"/>
<reference key="1">
    <citation type="journal article" date="1999" name="Nat. Genet.">
        <title>Comparative genomes of Chlamydia pneumoniae and C. trachomatis.</title>
        <authorList>
            <person name="Kalman S."/>
            <person name="Mitchell W.P."/>
            <person name="Marathe R."/>
            <person name="Lammel C.J."/>
            <person name="Fan J."/>
            <person name="Hyman R.W."/>
            <person name="Olinger L."/>
            <person name="Grimwood J."/>
            <person name="Davis R.W."/>
            <person name="Stephens R.S."/>
        </authorList>
    </citation>
    <scope>NUCLEOTIDE SEQUENCE [LARGE SCALE GENOMIC DNA]</scope>
    <source>
        <strain>CWL029</strain>
    </source>
</reference>
<reference key="2">
    <citation type="journal article" date="2000" name="Nucleic Acids Res.">
        <title>Genome sequences of Chlamydia trachomatis MoPn and Chlamydia pneumoniae AR39.</title>
        <authorList>
            <person name="Read T.D."/>
            <person name="Brunham R.C."/>
            <person name="Shen C."/>
            <person name="Gill S.R."/>
            <person name="Heidelberg J.F."/>
            <person name="White O."/>
            <person name="Hickey E.K."/>
            <person name="Peterson J.D."/>
            <person name="Utterback T.R."/>
            <person name="Berry K.J."/>
            <person name="Bass S."/>
            <person name="Linher K.D."/>
            <person name="Weidman J.F."/>
            <person name="Khouri H.M."/>
            <person name="Craven B."/>
            <person name="Bowman C."/>
            <person name="Dodson R.J."/>
            <person name="Gwinn M.L."/>
            <person name="Nelson W.C."/>
            <person name="DeBoy R.T."/>
            <person name="Kolonay J.F."/>
            <person name="McClarty G."/>
            <person name="Salzberg S.L."/>
            <person name="Eisen J.A."/>
            <person name="Fraser C.M."/>
        </authorList>
    </citation>
    <scope>NUCLEOTIDE SEQUENCE [LARGE SCALE GENOMIC DNA]</scope>
    <source>
        <strain>AR39</strain>
    </source>
</reference>
<reference key="3">
    <citation type="journal article" date="2000" name="Nucleic Acids Res.">
        <title>Comparison of whole genome sequences of Chlamydia pneumoniae J138 from Japan and CWL029 from USA.</title>
        <authorList>
            <person name="Shirai M."/>
            <person name="Hirakawa H."/>
            <person name="Kimoto M."/>
            <person name="Tabuchi M."/>
            <person name="Kishi F."/>
            <person name="Ouchi K."/>
            <person name="Shiba T."/>
            <person name="Ishii K."/>
            <person name="Hattori M."/>
            <person name="Kuhara S."/>
            <person name="Nakazawa T."/>
        </authorList>
    </citation>
    <scope>NUCLEOTIDE SEQUENCE [LARGE SCALE GENOMIC DNA]</scope>
    <source>
        <strain>J138</strain>
    </source>
</reference>
<reference key="4">
    <citation type="submission" date="2002-05" db="EMBL/GenBank/DDBJ databases">
        <title>The genome sequence of Chlamydia pneumoniae TW183 and comparison with other Chlamydia strains based on whole genome sequence analysis.</title>
        <authorList>
            <person name="Geng M.M."/>
            <person name="Schuhmacher A."/>
            <person name="Muehldorfer I."/>
            <person name="Bensch K.W."/>
            <person name="Schaefer K.P."/>
            <person name="Schneider S."/>
            <person name="Pohl T."/>
            <person name="Essig A."/>
            <person name="Marre R."/>
            <person name="Melchers K."/>
        </authorList>
    </citation>
    <scope>NUCLEOTIDE SEQUENCE [LARGE SCALE GENOMIC DNA]</scope>
    <source>
        <strain>TW-183</strain>
    </source>
</reference>
<accession>Q9Z9F9</accession>
<feature type="chain" id="PRO_0000123009" description="Nucleoside triphosphate pyrophosphatase">
    <location>
        <begin position="1"/>
        <end position="196"/>
    </location>
</feature>
<feature type="active site" description="Proton acceptor" evidence="1">
    <location>
        <position position="73"/>
    </location>
</feature>
<gene>
    <name type="ordered locus">CPn_0022</name>
    <name type="ordered locus">CP_0754</name>
    <name type="ordered locus">CPj0022</name>
    <name type="ordered locus">CpB0026</name>
</gene>
<comment type="function">
    <text evidence="1">Nucleoside triphosphate pyrophosphatase. May have a dual role in cell division arrest and in preventing the incorporation of modified nucleotides into cellular nucleic acids.</text>
</comment>
<comment type="catalytic activity">
    <reaction evidence="1">
        <text>a ribonucleoside 5'-triphosphate + H2O = a ribonucleoside 5'-phosphate + diphosphate + H(+)</text>
        <dbReference type="Rhea" id="RHEA:23996"/>
        <dbReference type="ChEBI" id="CHEBI:15377"/>
        <dbReference type="ChEBI" id="CHEBI:15378"/>
        <dbReference type="ChEBI" id="CHEBI:33019"/>
        <dbReference type="ChEBI" id="CHEBI:58043"/>
        <dbReference type="ChEBI" id="CHEBI:61557"/>
        <dbReference type="EC" id="3.6.1.9"/>
    </reaction>
</comment>
<comment type="catalytic activity">
    <reaction evidence="1">
        <text>a 2'-deoxyribonucleoside 5'-triphosphate + H2O = a 2'-deoxyribonucleoside 5'-phosphate + diphosphate + H(+)</text>
        <dbReference type="Rhea" id="RHEA:44644"/>
        <dbReference type="ChEBI" id="CHEBI:15377"/>
        <dbReference type="ChEBI" id="CHEBI:15378"/>
        <dbReference type="ChEBI" id="CHEBI:33019"/>
        <dbReference type="ChEBI" id="CHEBI:61560"/>
        <dbReference type="ChEBI" id="CHEBI:65317"/>
        <dbReference type="EC" id="3.6.1.9"/>
    </reaction>
</comment>
<comment type="cofactor">
    <cofactor evidence="1">
        <name>a divalent metal cation</name>
        <dbReference type="ChEBI" id="CHEBI:60240"/>
    </cofactor>
</comment>
<comment type="subcellular location">
    <subcellularLocation>
        <location evidence="1">Cytoplasm</location>
    </subcellularLocation>
</comment>
<comment type="similarity">
    <text evidence="1">Belongs to the Maf family.</text>
</comment>
<name>NTPP_CHLPN</name>